<keyword id="KW-0963">Cytoplasm</keyword>
<keyword id="KW-0396">Initiation factor</keyword>
<keyword id="KW-0648">Protein biosynthesis</keyword>
<keyword id="KW-1185">Reference proteome</keyword>
<keyword id="KW-0694">RNA-binding</keyword>
<accession>A6SJW6</accession>
<accession>A0A384K549</accession>
<evidence type="ECO:0000250" key="1">
    <source>
        <dbReference type="UniProtKB" id="K7IM66"/>
    </source>
</evidence>
<evidence type="ECO:0000255" key="2">
    <source>
        <dbReference type="HAMAP-Rule" id="MF_03003"/>
    </source>
</evidence>
<evidence type="ECO:0000256" key="3">
    <source>
        <dbReference type="SAM" id="MobiDB-lite"/>
    </source>
</evidence>
<feature type="chain" id="PRO_0000366887" description="Eukaryotic translation initiation factor 3 subunit D">
    <location>
        <begin position="1"/>
        <end position="576"/>
    </location>
</feature>
<feature type="region of interest" description="Disordered" evidence="3">
    <location>
        <begin position="103"/>
        <end position="176"/>
    </location>
</feature>
<feature type="region of interest" description="RNA gate" evidence="1">
    <location>
        <begin position="304"/>
        <end position="318"/>
    </location>
</feature>
<feature type="compositionally biased region" description="Gly residues" evidence="3">
    <location>
        <begin position="110"/>
        <end position="122"/>
    </location>
</feature>
<feature type="compositionally biased region" description="Basic and acidic residues" evidence="3">
    <location>
        <begin position="165"/>
        <end position="176"/>
    </location>
</feature>
<proteinExistence type="inferred from homology"/>
<reference key="1">
    <citation type="journal article" date="2011" name="PLoS Genet.">
        <title>Genomic analysis of the necrotrophic fungal pathogens Sclerotinia sclerotiorum and Botrytis cinerea.</title>
        <authorList>
            <person name="Amselem J."/>
            <person name="Cuomo C.A."/>
            <person name="van Kan J.A.L."/>
            <person name="Viaud M."/>
            <person name="Benito E.P."/>
            <person name="Couloux A."/>
            <person name="Coutinho P.M."/>
            <person name="de Vries R.P."/>
            <person name="Dyer P.S."/>
            <person name="Fillinger S."/>
            <person name="Fournier E."/>
            <person name="Gout L."/>
            <person name="Hahn M."/>
            <person name="Kohn L."/>
            <person name="Lapalu N."/>
            <person name="Plummer K.M."/>
            <person name="Pradier J.-M."/>
            <person name="Quevillon E."/>
            <person name="Sharon A."/>
            <person name="Simon A."/>
            <person name="ten Have A."/>
            <person name="Tudzynski B."/>
            <person name="Tudzynski P."/>
            <person name="Wincker P."/>
            <person name="Andrew M."/>
            <person name="Anthouard V."/>
            <person name="Beever R.E."/>
            <person name="Beffa R."/>
            <person name="Benoit I."/>
            <person name="Bouzid O."/>
            <person name="Brault B."/>
            <person name="Chen Z."/>
            <person name="Choquer M."/>
            <person name="Collemare J."/>
            <person name="Cotton P."/>
            <person name="Danchin E.G."/>
            <person name="Da Silva C."/>
            <person name="Gautier A."/>
            <person name="Giraud C."/>
            <person name="Giraud T."/>
            <person name="Gonzalez C."/>
            <person name="Grossetete S."/>
            <person name="Gueldener U."/>
            <person name="Henrissat B."/>
            <person name="Howlett B.J."/>
            <person name="Kodira C."/>
            <person name="Kretschmer M."/>
            <person name="Lappartient A."/>
            <person name="Leroch M."/>
            <person name="Levis C."/>
            <person name="Mauceli E."/>
            <person name="Neuveglise C."/>
            <person name="Oeser B."/>
            <person name="Pearson M."/>
            <person name="Poulain J."/>
            <person name="Poussereau N."/>
            <person name="Quesneville H."/>
            <person name="Rascle C."/>
            <person name="Schumacher J."/>
            <person name="Segurens B."/>
            <person name="Sexton A."/>
            <person name="Silva E."/>
            <person name="Sirven C."/>
            <person name="Soanes D.M."/>
            <person name="Talbot N.J."/>
            <person name="Templeton M."/>
            <person name="Yandava C."/>
            <person name="Yarden O."/>
            <person name="Zeng Q."/>
            <person name="Rollins J.A."/>
            <person name="Lebrun M.-H."/>
            <person name="Dickman M."/>
        </authorList>
    </citation>
    <scope>NUCLEOTIDE SEQUENCE [LARGE SCALE GENOMIC DNA]</scope>
    <source>
        <strain>B05.10</strain>
    </source>
</reference>
<reference key="2">
    <citation type="journal article" date="2012" name="Eukaryot. Cell">
        <title>Genome update of Botrytis cinerea strains B05.10 and T4.</title>
        <authorList>
            <person name="Staats M."/>
            <person name="van Kan J.A.L."/>
        </authorList>
    </citation>
    <scope>NUCLEOTIDE SEQUENCE [LARGE SCALE GENOMIC DNA]</scope>
    <scope>GENOME REANNOTATION</scope>
    <source>
        <strain>B05.10</strain>
    </source>
</reference>
<reference key="3">
    <citation type="journal article" date="2017" name="Mol. Plant Pathol.">
        <title>A gapless genome sequence of the fungus Botrytis cinerea.</title>
        <authorList>
            <person name="van Kan J.A.L."/>
            <person name="Stassen J.H.M."/>
            <person name="Mosbach A."/>
            <person name="van der Lee T.A.J."/>
            <person name="Faino L."/>
            <person name="Farmer A.D."/>
            <person name="Papasotiriou D.G."/>
            <person name="Zhou S."/>
            <person name="Seidl M.F."/>
            <person name="Cottam E."/>
            <person name="Edel D."/>
            <person name="Hahn M."/>
            <person name="Schwartz D.C."/>
            <person name="Dietrich R.A."/>
            <person name="Widdison S."/>
            <person name="Scalliet G."/>
        </authorList>
    </citation>
    <scope>NUCLEOTIDE SEQUENCE [LARGE SCALE GENOMIC DNA]</scope>
    <scope>GENOME REANNOTATION</scope>
    <source>
        <strain>B05.10</strain>
    </source>
</reference>
<sequence length="576" mass="63969">MAPISLSDIISALPSEDSWGPSTTSETTLNGVPYAPYSKGDKLGRMADWTAEGKDGRDGRGGRQQYNRNYRDQQVYGAGTSSLFAVQLAEDESTFSVVSNTRDSTKTRFGRGGLARGRGQRGGRGDTRGGRGQFQRVGGRGGQQGYNSYDTRGGRGGARGGRKFGWKDYDKPQRNRDASVNIKPDWKMLEEIDFNRLAKLNLDTDDGEDIDSYGFLYYYDRSFDKQPVKAAERKLNVVDRASYNVTTSSDPVIQELAEKDEATIFATDSILSMLMCSPRSVYPWDIVIVRQGNKVFLDKRDNATLDMVTVNENAADAPMDASEGSKDAINQPSALAEEATYINHNFANQVMKESDSQKVEMENENPFYNSAEETDPPASKAYKYRKFDLSLNDEDPVHLVVRTELDAVSKNAISGEDQFLTVKALNEFDSKAQGSGGALDWRTKLVSQRGAVVATEMKNNSCKLARWTVQSIIAKADVMKLGFVSRANPKLNDRHVVLGVIGWKPRDFASQMNLSLSNGWGIVRTIVDMCLKREEGKYVLVKDPNKPILRLYQVPAGSFEDDGEHDVIEENVEEDD</sequence>
<dbReference type="EMBL" id="CP009819">
    <property type="protein sequence ID" value="ATZ57946.1"/>
    <property type="molecule type" value="Genomic_DNA"/>
</dbReference>
<dbReference type="SMR" id="A6SJW6"/>
<dbReference type="EnsemblFungi" id="Bcin15g04490.1">
    <property type="protein sequence ID" value="Bcin15p04490.1"/>
    <property type="gene ID" value="Bcin15g04490"/>
</dbReference>
<dbReference type="VEuPathDB" id="FungiDB:Bcin15g04490"/>
<dbReference type="OrthoDB" id="16538at2759"/>
<dbReference type="Proteomes" id="UP000001798">
    <property type="component" value="Chromosome bcin15"/>
</dbReference>
<dbReference type="GO" id="GO:0005829">
    <property type="term" value="C:cytosol"/>
    <property type="evidence" value="ECO:0007669"/>
    <property type="project" value="EnsemblFungi"/>
</dbReference>
<dbReference type="GO" id="GO:0016282">
    <property type="term" value="C:eukaryotic 43S preinitiation complex"/>
    <property type="evidence" value="ECO:0007669"/>
    <property type="project" value="UniProtKB-UniRule"/>
</dbReference>
<dbReference type="GO" id="GO:0033290">
    <property type="term" value="C:eukaryotic 48S preinitiation complex"/>
    <property type="evidence" value="ECO:0007669"/>
    <property type="project" value="UniProtKB-UniRule"/>
</dbReference>
<dbReference type="GO" id="GO:0071540">
    <property type="term" value="C:eukaryotic translation initiation factor 3 complex, eIF3e"/>
    <property type="evidence" value="ECO:0007669"/>
    <property type="project" value="EnsemblFungi"/>
</dbReference>
<dbReference type="GO" id="GO:0071541">
    <property type="term" value="C:eukaryotic translation initiation factor 3 complex, eIF3m"/>
    <property type="evidence" value="ECO:0007669"/>
    <property type="project" value="EnsemblFungi"/>
</dbReference>
<dbReference type="GO" id="GO:0098808">
    <property type="term" value="F:mRNA cap binding"/>
    <property type="evidence" value="ECO:0007669"/>
    <property type="project" value="UniProtKB-UniRule"/>
</dbReference>
<dbReference type="GO" id="GO:0003743">
    <property type="term" value="F:translation initiation factor activity"/>
    <property type="evidence" value="ECO:0007669"/>
    <property type="project" value="UniProtKB-UniRule"/>
</dbReference>
<dbReference type="GO" id="GO:0002191">
    <property type="term" value="P:cap-dependent translational initiation"/>
    <property type="evidence" value="ECO:0007669"/>
    <property type="project" value="UniProtKB-UniRule"/>
</dbReference>
<dbReference type="GO" id="GO:0001732">
    <property type="term" value="P:formation of cytoplasmic translation initiation complex"/>
    <property type="evidence" value="ECO:0007669"/>
    <property type="project" value="UniProtKB-UniRule"/>
</dbReference>
<dbReference type="HAMAP" id="MF_03003">
    <property type="entry name" value="eIF3d"/>
    <property type="match status" value="1"/>
</dbReference>
<dbReference type="InterPro" id="IPR007783">
    <property type="entry name" value="eIF3d"/>
</dbReference>
<dbReference type="PANTHER" id="PTHR12399">
    <property type="entry name" value="EUKARYOTIC TRANSLATION INITIATION FACTOR 3 SUBUNIT 7"/>
    <property type="match status" value="1"/>
</dbReference>
<dbReference type="PANTHER" id="PTHR12399:SF0">
    <property type="entry name" value="EUKARYOTIC TRANSLATION INITIATION FACTOR 3 SUBUNIT D"/>
    <property type="match status" value="1"/>
</dbReference>
<dbReference type="Pfam" id="PF05091">
    <property type="entry name" value="eIF-3_zeta"/>
    <property type="match status" value="1"/>
</dbReference>
<dbReference type="PIRSF" id="PIRSF016281">
    <property type="entry name" value="EIF-3_zeta"/>
    <property type="match status" value="1"/>
</dbReference>
<gene>
    <name type="ORF">BC1G_12797</name>
    <name type="ORF">BCIN_15g04490</name>
</gene>
<comment type="function">
    <text evidence="2">mRNA cap-binding component of the eukaryotic translation initiation factor 3 (eIF-3) complex, which is involved in protein synthesis of a specialized repertoire of mRNAs and, together with other initiation factors, stimulates binding of mRNA and methionyl-tRNAi to the 40S ribosome. The eIF-3 complex specifically targets and initiates translation of a subset of mRNAs involved in cell proliferation. In the eIF-3 complex, eif3d specifically recognizes and binds the 7-methylguanosine cap of a subset of mRNAs.</text>
</comment>
<comment type="subunit">
    <text evidence="2">Component of the eukaryotic translation initiation factor 3 (eIF-3) complex.</text>
</comment>
<comment type="subcellular location">
    <subcellularLocation>
        <location evidence="2">Cytoplasm</location>
    </subcellularLocation>
</comment>
<comment type="domain">
    <text evidence="2">The RNA gate region regulates mRNA cap recognition to prevent promiscuous mRNA-binding before assembly of eif3d into the full eukaryotic translation initiation factor 3 (eIF-3) complex.</text>
</comment>
<comment type="similarity">
    <text evidence="2">Belongs to the eIF-3 subunit D family.</text>
</comment>
<organism>
    <name type="scientific">Botryotinia fuckeliana (strain B05.10)</name>
    <name type="common">Noble rot fungus</name>
    <name type="synonym">Botrytis cinerea</name>
    <dbReference type="NCBI Taxonomy" id="332648"/>
    <lineage>
        <taxon>Eukaryota</taxon>
        <taxon>Fungi</taxon>
        <taxon>Dikarya</taxon>
        <taxon>Ascomycota</taxon>
        <taxon>Pezizomycotina</taxon>
        <taxon>Leotiomycetes</taxon>
        <taxon>Helotiales</taxon>
        <taxon>Sclerotiniaceae</taxon>
        <taxon>Botrytis</taxon>
    </lineage>
</organism>
<protein>
    <recommendedName>
        <fullName evidence="2">Eukaryotic translation initiation factor 3 subunit D</fullName>
        <shortName evidence="2">eIF3d</shortName>
    </recommendedName>
</protein>
<name>EIF3D_BOTFB</name>